<keyword id="KW-0143">Chaperone</keyword>
<keyword id="KW-0963">Cytoplasm</keyword>
<keyword id="KW-1185">Reference proteome</keyword>
<keyword id="KW-0690">Ribosome biogenesis</keyword>
<keyword id="KW-0698">rRNA processing</keyword>
<reference key="1">
    <citation type="submission" date="2006-12" db="EMBL/GenBank/DDBJ databases">
        <title>Complete sequence of chromosome 1 of Nocardioides sp. JS614.</title>
        <authorList>
            <person name="Copeland A."/>
            <person name="Lucas S."/>
            <person name="Lapidus A."/>
            <person name="Barry K."/>
            <person name="Detter J.C."/>
            <person name="Glavina del Rio T."/>
            <person name="Hammon N."/>
            <person name="Israni S."/>
            <person name="Dalin E."/>
            <person name="Tice H."/>
            <person name="Pitluck S."/>
            <person name="Thompson L.S."/>
            <person name="Brettin T."/>
            <person name="Bruce D."/>
            <person name="Han C."/>
            <person name="Tapia R."/>
            <person name="Schmutz J."/>
            <person name="Larimer F."/>
            <person name="Land M."/>
            <person name="Hauser L."/>
            <person name="Kyrpides N."/>
            <person name="Kim E."/>
            <person name="Mattes T."/>
            <person name="Gossett J."/>
            <person name="Richardson P."/>
        </authorList>
    </citation>
    <scope>NUCLEOTIDE SEQUENCE [LARGE SCALE GENOMIC DNA]</scope>
    <source>
        <strain>ATCC BAA-499 / JS614</strain>
    </source>
</reference>
<feature type="chain" id="PRO_0000321741" description="Ribosome maturation factor RimM">
    <location>
        <begin position="1"/>
        <end position="184"/>
    </location>
</feature>
<feature type="domain" description="PRC barrel" evidence="1">
    <location>
        <begin position="101"/>
        <end position="174"/>
    </location>
</feature>
<name>RIMM_NOCSJ</name>
<comment type="function">
    <text evidence="1">An accessory protein needed during the final step in the assembly of 30S ribosomal subunit, possibly for assembly of the head region. Essential for efficient processing of 16S rRNA. May be needed both before and after RbfA during the maturation of 16S rRNA. It has affinity for free ribosomal 30S subunits but not for 70S ribosomes.</text>
</comment>
<comment type="subunit">
    <text evidence="1">Binds ribosomal protein uS19.</text>
</comment>
<comment type="subcellular location">
    <subcellularLocation>
        <location evidence="1">Cytoplasm</location>
    </subcellularLocation>
</comment>
<comment type="domain">
    <text evidence="1">The PRC barrel domain binds ribosomal protein uS19.</text>
</comment>
<comment type="similarity">
    <text evidence="1">Belongs to the RimM family.</text>
</comment>
<protein>
    <recommendedName>
        <fullName evidence="1">Ribosome maturation factor RimM</fullName>
    </recommendedName>
</protein>
<dbReference type="EMBL" id="CP000509">
    <property type="protein sequence ID" value="ABL82759.1"/>
    <property type="molecule type" value="Genomic_DNA"/>
</dbReference>
<dbReference type="SMR" id="A1SLS4"/>
<dbReference type="STRING" id="196162.Noca_3257"/>
<dbReference type="KEGG" id="nca:Noca_3257"/>
<dbReference type="eggNOG" id="COG0806">
    <property type="taxonomic scope" value="Bacteria"/>
</dbReference>
<dbReference type="HOGENOM" id="CLU_077636_0_0_11"/>
<dbReference type="Proteomes" id="UP000000640">
    <property type="component" value="Chromosome"/>
</dbReference>
<dbReference type="GO" id="GO:0005737">
    <property type="term" value="C:cytoplasm"/>
    <property type="evidence" value="ECO:0007669"/>
    <property type="project" value="UniProtKB-SubCell"/>
</dbReference>
<dbReference type="GO" id="GO:0005840">
    <property type="term" value="C:ribosome"/>
    <property type="evidence" value="ECO:0007669"/>
    <property type="project" value="InterPro"/>
</dbReference>
<dbReference type="GO" id="GO:0043022">
    <property type="term" value="F:ribosome binding"/>
    <property type="evidence" value="ECO:0007669"/>
    <property type="project" value="InterPro"/>
</dbReference>
<dbReference type="GO" id="GO:0042274">
    <property type="term" value="P:ribosomal small subunit biogenesis"/>
    <property type="evidence" value="ECO:0007669"/>
    <property type="project" value="UniProtKB-UniRule"/>
</dbReference>
<dbReference type="GO" id="GO:0006364">
    <property type="term" value="P:rRNA processing"/>
    <property type="evidence" value="ECO:0007669"/>
    <property type="project" value="UniProtKB-UniRule"/>
</dbReference>
<dbReference type="Gene3D" id="2.30.30.240">
    <property type="entry name" value="PRC-barrel domain"/>
    <property type="match status" value="1"/>
</dbReference>
<dbReference type="Gene3D" id="2.40.30.60">
    <property type="entry name" value="RimM"/>
    <property type="match status" value="1"/>
</dbReference>
<dbReference type="HAMAP" id="MF_00014">
    <property type="entry name" value="Ribosome_mat_RimM"/>
    <property type="match status" value="1"/>
</dbReference>
<dbReference type="InterPro" id="IPR011033">
    <property type="entry name" value="PRC_barrel-like_sf"/>
</dbReference>
<dbReference type="InterPro" id="IPR056792">
    <property type="entry name" value="PRC_RimM"/>
</dbReference>
<dbReference type="InterPro" id="IPR011961">
    <property type="entry name" value="RimM"/>
</dbReference>
<dbReference type="InterPro" id="IPR002676">
    <property type="entry name" value="RimM_N"/>
</dbReference>
<dbReference type="InterPro" id="IPR036976">
    <property type="entry name" value="RimM_N_sf"/>
</dbReference>
<dbReference type="InterPro" id="IPR009000">
    <property type="entry name" value="Transl_B-barrel_sf"/>
</dbReference>
<dbReference type="NCBIfam" id="TIGR02273">
    <property type="entry name" value="16S_RimM"/>
    <property type="match status" value="1"/>
</dbReference>
<dbReference type="PANTHER" id="PTHR33692">
    <property type="entry name" value="RIBOSOME MATURATION FACTOR RIMM"/>
    <property type="match status" value="1"/>
</dbReference>
<dbReference type="PANTHER" id="PTHR33692:SF1">
    <property type="entry name" value="RIBOSOME MATURATION FACTOR RIMM"/>
    <property type="match status" value="1"/>
</dbReference>
<dbReference type="Pfam" id="PF24986">
    <property type="entry name" value="PRC_RimM"/>
    <property type="match status" value="1"/>
</dbReference>
<dbReference type="Pfam" id="PF01782">
    <property type="entry name" value="RimM"/>
    <property type="match status" value="1"/>
</dbReference>
<dbReference type="SUPFAM" id="SSF50346">
    <property type="entry name" value="PRC-barrel domain"/>
    <property type="match status" value="1"/>
</dbReference>
<dbReference type="SUPFAM" id="SSF50447">
    <property type="entry name" value="Translation proteins"/>
    <property type="match status" value="1"/>
</dbReference>
<evidence type="ECO:0000255" key="1">
    <source>
        <dbReference type="HAMAP-Rule" id="MF_00014"/>
    </source>
</evidence>
<accession>A1SLS4</accession>
<organism>
    <name type="scientific">Nocardioides sp. (strain ATCC BAA-499 / JS614)</name>
    <dbReference type="NCBI Taxonomy" id="196162"/>
    <lineage>
        <taxon>Bacteria</taxon>
        <taxon>Bacillati</taxon>
        <taxon>Actinomycetota</taxon>
        <taxon>Actinomycetes</taxon>
        <taxon>Propionibacteriales</taxon>
        <taxon>Nocardioidaceae</taxon>
        <taxon>Nocardioides</taxon>
    </lineage>
</organism>
<sequence>METIEVLVGRIGKPHGIRGELTLDVRTDEPERRFAPGAVLRAEPPAGSASRLRRVTVRSARWHQSTLLVAFEEVADRTAAEAARGILLHATVPADAAPDDPDEYYDHQLVGLAAYDVSGAALGSVTGLVHGGAQDLLTVRTPDGRDALVPFVKALVPEVDLAGRRVVIADRPGLVTPLPEDDEH</sequence>
<proteinExistence type="inferred from homology"/>
<gene>
    <name evidence="1" type="primary">rimM</name>
    <name type="ordered locus">Noca_3257</name>
</gene>